<accession>Q2SRU2</accession>
<protein>
    <recommendedName>
        <fullName evidence="1">Ribonuclease Y</fullName>
        <shortName evidence="1">RNase Y</shortName>
        <ecNumber evidence="1">3.1.-.-</ecNumber>
    </recommendedName>
</protein>
<organism>
    <name type="scientific">Mycoplasma capricolum subsp. capricolum (strain California kid / ATCC 27343 / NCTC 10154)</name>
    <dbReference type="NCBI Taxonomy" id="340047"/>
    <lineage>
        <taxon>Bacteria</taxon>
        <taxon>Bacillati</taxon>
        <taxon>Mycoplasmatota</taxon>
        <taxon>Mollicutes</taxon>
        <taxon>Mycoplasmataceae</taxon>
        <taxon>Mycoplasma</taxon>
    </lineage>
</organism>
<proteinExistence type="inferred from homology"/>
<dbReference type="EC" id="3.1.-.-" evidence="1"/>
<dbReference type="EMBL" id="CP000123">
    <property type="protein sequence ID" value="ABC01599.1"/>
    <property type="molecule type" value="Genomic_DNA"/>
</dbReference>
<dbReference type="RefSeq" id="WP_011387419.1">
    <property type="nucleotide sequence ID" value="NC_007633.1"/>
</dbReference>
<dbReference type="SMR" id="Q2SRU2"/>
<dbReference type="GeneID" id="23778493"/>
<dbReference type="KEGG" id="mcp:MCAP_0550"/>
<dbReference type="HOGENOM" id="CLU_028328_1_0_14"/>
<dbReference type="PhylomeDB" id="Q2SRU2"/>
<dbReference type="Proteomes" id="UP000001928">
    <property type="component" value="Chromosome"/>
</dbReference>
<dbReference type="GO" id="GO:0005886">
    <property type="term" value="C:plasma membrane"/>
    <property type="evidence" value="ECO:0007669"/>
    <property type="project" value="UniProtKB-SubCell"/>
</dbReference>
<dbReference type="GO" id="GO:0003723">
    <property type="term" value="F:RNA binding"/>
    <property type="evidence" value="ECO:0007669"/>
    <property type="project" value="UniProtKB-UniRule"/>
</dbReference>
<dbReference type="GO" id="GO:0004521">
    <property type="term" value="F:RNA endonuclease activity"/>
    <property type="evidence" value="ECO:0007669"/>
    <property type="project" value="UniProtKB-UniRule"/>
</dbReference>
<dbReference type="GO" id="GO:0006402">
    <property type="term" value="P:mRNA catabolic process"/>
    <property type="evidence" value="ECO:0007669"/>
    <property type="project" value="UniProtKB-UniRule"/>
</dbReference>
<dbReference type="CDD" id="cd00077">
    <property type="entry name" value="HDc"/>
    <property type="match status" value="1"/>
</dbReference>
<dbReference type="CDD" id="cd22431">
    <property type="entry name" value="KH-I_RNaseY"/>
    <property type="match status" value="1"/>
</dbReference>
<dbReference type="Gene3D" id="1.10.3210.10">
    <property type="entry name" value="Hypothetical protein af1432"/>
    <property type="match status" value="1"/>
</dbReference>
<dbReference type="HAMAP" id="MF_00335">
    <property type="entry name" value="RNase_Y"/>
    <property type="match status" value="1"/>
</dbReference>
<dbReference type="InterPro" id="IPR051094">
    <property type="entry name" value="Diverse_Catalytic_Enzymes"/>
</dbReference>
<dbReference type="InterPro" id="IPR003607">
    <property type="entry name" value="HD/PDEase_dom"/>
</dbReference>
<dbReference type="InterPro" id="IPR006674">
    <property type="entry name" value="HD_domain"/>
</dbReference>
<dbReference type="InterPro" id="IPR006675">
    <property type="entry name" value="HDIG_dom"/>
</dbReference>
<dbReference type="InterPro" id="IPR004087">
    <property type="entry name" value="KH_dom"/>
</dbReference>
<dbReference type="InterPro" id="IPR004088">
    <property type="entry name" value="KH_dom_type_1"/>
</dbReference>
<dbReference type="InterPro" id="IPR036612">
    <property type="entry name" value="KH_dom_type_1_sf"/>
</dbReference>
<dbReference type="InterPro" id="IPR017705">
    <property type="entry name" value="Ribonuclease_Y"/>
</dbReference>
<dbReference type="InterPro" id="IPR022711">
    <property type="entry name" value="RNase_Y_N"/>
</dbReference>
<dbReference type="NCBIfam" id="TIGR00277">
    <property type="entry name" value="HDIG"/>
    <property type="match status" value="1"/>
</dbReference>
<dbReference type="NCBIfam" id="TIGR03319">
    <property type="entry name" value="RNase_Y"/>
    <property type="match status" value="1"/>
</dbReference>
<dbReference type="PANTHER" id="PTHR35795:SF1">
    <property type="entry name" value="BIS(5'-NUCLEOSYL)-TETRAPHOSPHATASE, SYMMETRICAL"/>
    <property type="match status" value="1"/>
</dbReference>
<dbReference type="PANTHER" id="PTHR35795">
    <property type="entry name" value="SLR1885 PROTEIN"/>
    <property type="match status" value="1"/>
</dbReference>
<dbReference type="Pfam" id="PF01966">
    <property type="entry name" value="HD"/>
    <property type="match status" value="1"/>
</dbReference>
<dbReference type="Pfam" id="PF00013">
    <property type="entry name" value="KH_1"/>
    <property type="match status" value="1"/>
</dbReference>
<dbReference type="Pfam" id="PF12072">
    <property type="entry name" value="RNase_Y_N"/>
    <property type="match status" value="1"/>
</dbReference>
<dbReference type="SMART" id="SM00471">
    <property type="entry name" value="HDc"/>
    <property type="match status" value="1"/>
</dbReference>
<dbReference type="SMART" id="SM00322">
    <property type="entry name" value="KH"/>
    <property type="match status" value="1"/>
</dbReference>
<dbReference type="SUPFAM" id="SSF54791">
    <property type="entry name" value="Eukaryotic type KH-domain (KH-domain type I)"/>
    <property type="match status" value="1"/>
</dbReference>
<dbReference type="SUPFAM" id="SSF109604">
    <property type="entry name" value="HD-domain/PDEase-like"/>
    <property type="match status" value="1"/>
</dbReference>
<dbReference type="PROSITE" id="PS51831">
    <property type="entry name" value="HD"/>
    <property type="match status" value="1"/>
</dbReference>
<name>RNY_MYCCT</name>
<gene>
    <name evidence="1" type="primary">rny</name>
    <name type="ordered locus">MCAP_0550</name>
</gene>
<reference key="1">
    <citation type="submission" date="2005-09" db="EMBL/GenBank/DDBJ databases">
        <authorList>
            <person name="Glass J.I."/>
            <person name="Lartigue C."/>
            <person name="Pfannkoch C."/>
            <person name="Baden-Tillson H."/>
            <person name="Smith H.O."/>
            <person name="Venter J.C."/>
            <person name="Roske K."/>
            <person name="Wise K.S."/>
            <person name="Calcutt M.J."/>
            <person name="Nelson W.C."/>
            <person name="Nierman W.C."/>
        </authorList>
    </citation>
    <scope>NUCLEOTIDE SEQUENCE [LARGE SCALE GENOMIC DNA]</scope>
    <source>
        <strain>California kid / ATCC 27343 / NCTC 10154</strain>
    </source>
</reference>
<feature type="chain" id="PRO_0000344908" description="Ribonuclease Y">
    <location>
        <begin position="1"/>
        <end position="509"/>
    </location>
</feature>
<feature type="transmembrane region" description="Helical" evidence="1">
    <location>
        <begin position="5"/>
        <end position="25"/>
    </location>
</feature>
<feature type="domain" description="KH" evidence="1">
    <location>
        <begin position="199"/>
        <end position="259"/>
    </location>
</feature>
<feature type="domain" description="HD" evidence="2">
    <location>
        <begin position="325"/>
        <end position="418"/>
    </location>
</feature>
<comment type="function">
    <text evidence="1">Endoribonuclease that initiates mRNA decay.</text>
</comment>
<comment type="subcellular location">
    <subcellularLocation>
        <location evidence="1">Cell membrane</location>
        <topology evidence="1">Single-pass membrane protein</topology>
    </subcellularLocation>
</comment>
<comment type="similarity">
    <text evidence="1">Belongs to the RNase Y family.</text>
</comment>
<sequence>MNDDIIILLSVFCGIFFICFIICSSIALYLWKSKSRKRLVEQYTKEAKQAKKQILANGYKEISEAKMLFLKRSELEKNELDRVKEQLELRSNDLKRNQEIVESKSQRLDASLLDLEKRKFLLDKKEEYLIKVLEDASSLTKSQAKELLIKQVKNKSEKELISILKNAELQAHSNSKMIANNIIISAMERIKVELTSQRTTNIVKLPSDDLKGRIIGKDGRNMKAFKQIGGVDIVIDETPNTVVVSSFNPIRREIATRTLEQLIIDGRIQPVKIENELKKQEQELEYIIQETGLSTIKELNINDIDIELVKLIGKLKFRTSYGQNVLAHSIEVAKLSGAIASELGLDVEKAIRAGLLHDIGKAIDFEKQGSHVVLGAEIAKKYNEDPIVINCIESHHEDKEKESEIAAIVAIADSISASRPGARYNAIDEFILRMTEIEKIGNSIPGVAKTYALQSGRQIRLIVDPLVASDLDLAMILEKMKEEIKNKVIIPGEITITVIRERKETDVLK</sequence>
<keyword id="KW-1003">Cell membrane</keyword>
<keyword id="KW-0255">Endonuclease</keyword>
<keyword id="KW-0378">Hydrolase</keyword>
<keyword id="KW-0472">Membrane</keyword>
<keyword id="KW-0540">Nuclease</keyword>
<keyword id="KW-0694">RNA-binding</keyword>
<keyword id="KW-0812">Transmembrane</keyword>
<keyword id="KW-1133">Transmembrane helix</keyword>
<evidence type="ECO:0000255" key="1">
    <source>
        <dbReference type="HAMAP-Rule" id="MF_00335"/>
    </source>
</evidence>
<evidence type="ECO:0000255" key="2">
    <source>
        <dbReference type="PROSITE-ProRule" id="PRU01175"/>
    </source>
</evidence>